<dbReference type="EMBL" id="CU928162">
    <property type="protein sequence ID" value="CAR10289.2"/>
    <property type="molecule type" value="Genomic_DNA"/>
</dbReference>
<dbReference type="RefSeq" id="WP_001190062.1">
    <property type="nucleotide sequence ID" value="NC_011745.1"/>
</dbReference>
<dbReference type="SMR" id="B7N1R9"/>
<dbReference type="GeneID" id="93778510"/>
<dbReference type="KEGG" id="ecq:ECED1_4154"/>
<dbReference type="HOGENOM" id="CLU_113319_1_4_6"/>
<dbReference type="Proteomes" id="UP000000748">
    <property type="component" value="Chromosome"/>
</dbReference>
<dbReference type="GO" id="GO:0003700">
    <property type="term" value="F:DNA-binding transcription factor activity"/>
    <property type="evidence" value="ECO:0007669"/>
    <property type="project" value="UniProtKB-UniRule"/>
</dbReference>
<dbReference type="GO" id="GO:0016151">
    <property type="term" value="F:nickel cation binding"/>
    <property type="evidence" value="ECO:0007669"/>
    <property type="project" value="UniProtKB-UniRule"/>
</dbReference>
<dbReference type="GO" id="GO:0043565">
    <property type="term" value="F:sequence-specific DNA binding"/>
    <property type="evidence" value="ECO:0007669"/>
    <property type="project" value="UniProtKB-ARBA"/>
</dbReference>
<dbReference type="GO" id="GO:0010045">
    <property type="term" value="P:response to nickel cation"/>
    <property type="evidence" value="ECO:0007669"/>
    <property type="project" value="InterPro"/>
</dbReference>
<dbReference type="CDD" id="cd22231">
    <property type="entry name" value="RHH_NikR_HicB-like"/>
    <property type="match status" value="1"/>
</dbReference>
<dbReference type="FunFam" id="1.10.1220.10:FF:000001">
    <property type="entry name" value="Nickel-responsive regulator"/>
    <property type="match status" value="1"/>
</dbReference>
<dbReference type="FunFam" id="3.30.70.1150:FF:000002">
    <property type="entry name" value="Nickel-responsive regulator"/>
    <property type="match status" value="1"/>
</dbReference>
<dbReference type="Gene3D" id="3.30.70.1150">
    <property type="entry name" value="ACT-like. Chain A, domain 2"/>
    <property type="match status" value="1"/>
</dbReference>
<dbReference type="Gene3D" id="1.10.1220.10">
    <property type="entry name" value="Met repressor-like"/>
    <property type="match status" value="1"/>
</dbReference>
<dbReference type="HAMAP" id="MF_00476">
    <property type="entry name" value="NikR"/>
    <property type="match status" value="1"/>
</dbReference>
<dbReference type="InterPro" id="IPR027271">
    <property type="entry name" value="Acetolactate_synth/TF_NikR_C"/>
</dbReference>
<dbReference type="InterPro" id="IPR045865">
    <property type="entry name" value="ACT-like_dom_sf"/>
</dbReference>
<dbReference type="InterPro" id="IPR013321">
    <property type="entry name" value="Arc_rbn_hlx_hlx"/>
</dbReference>
<dbReference type="InterPro" id="IPR002145">
    <property type="entry name" value="CopG"/>
</dbReference>
<dbReference type="InterPro" id="IPR050192">
    <property type="entry name" value="CopG/NikR_regulator"/>
</dbReference>
<dbReference type="InterPro" id="IPR022988">
    <property type="entry name" value="Ni_resp_reg_NikR"/>
</dbReference>
<dbReference type="InterPro" id="IPR014160">
    <property type="entry name" value="Nickel_NikR_proteobac"/>
</dbReference>
<dbReference type="InterPro" id="IPR010985">
    <property type="entry name" value="Ribbon_hlx_hlx"/>
</dbReference>
<dbReference type="InterPro" id="IPR014864">
    <property type="entry name" value="TF_NikR_Ni-bd_C"/>
</dbReference>
<dbReference type="NCBIfam" id="TIGR02793">
    <property type="entry name" value="nikR"/>
    <property type="match status" value="1"/>
</dbReference>
<dbReference type="NCBIfam" id="NF002815">
    <property type="entry name" value="PRK02967.1"/>
    <property type="match status" value="1"/>
</dbReference>
<dbReference type="NCBIfam" id="NF003381">
    <property type="entry name" value="PRK04460.1"/>
    <property type="match status" value="1"/>
</dbReference>
<dbReference type="PANTHER" id="PTHR34719">
    <property type="entry name" value="NICKEL-RESPONSIVE REGULATOR"/>
    <property type="match status" value="1"/>
</dbReference>
<dbReference type="PANTHER" id="PTHR34719:SF2">
    <property type="entry name" value="NICKEL-RESPONSIVE REGULATOR"/>
    <property type="match status" value="1"/>
</dbReference>
<dbReference type="Pfam" id="PF08753">
    <property type="entry name" value="NikR_C"/>
    <property type="match status" value="1"/>
</dbReference>
<dbReference type="Pfam" id="PF01402">
    <property type="entry name" value="RHH_1"/>
    <property type="match status" value="1"/>
</dbReference>
<dbReference type="SUPFAM" id="SSF55021">
    <property type="entry name" value="ACT-like"/>
    <property type="match status" value="1"/>
</dbReference>
<dbReference type="SUPFAM" id="SSF47598">
    <property type="entry name" value="Ribbon-helix-helix"/>
    <property type="match status" value="1"/>
</dbReference>
<proteinExistence type="inferred from homology"/>
<accession>B7N1R9</accession>
<gene>
    <name evidence="1" type="primary">nikR</name>
    <name type="ordered locus">ECED1_4154</name>
</gene>
<evidence type="ECO:0000255" key="1">
    <source>
        <dbReference type="HAMAP-Rule" id="MF_00476"/>
    </source>
</evidence>
<organism>
    <name type="scientific">Escherichia coli O81 (strain ED1a)</name>
    <dbReference type="NCBI Taxonomy" id="585397"/>
    <lineage>
        <taxon>Bacteria</taxon>
        <taxon>Pseudomonadati</taxon>
        <taxon>Pseudomonadota</taxon>
        <taxon>Gammaproteobacteria</taxon>
        <taxon>Enterobacterales</taxon>
        <taxon>Enterobacteriaceae</taxon>
        <taxon>Escherichia</taxon>
    </lineage>
</organism>
<reference key="1">
    <citation type="journal article" date="2009" name="PLoS Genet.">
        <title>Organised genome dynamics in the Escherichia coli species results in highly diverse adaptive paths.</title>
        <authorList>
            <person name="Touchon M."/>
            <person name="Hoede C."/>
            <person name="Tenaillon O."/>
            <person name="Barbe V."/>
            <person name="Baeriswyl S."/>
            <person name="Bidet P."/>
            <person name="Bingen E."/>
            <person name="Bonacorsi S."/>
            <person name="Bouchier C."/>
            <person name="Bouvet O."/>
            <person name="Calteau A."/>
            <person name="Chiapello H."/>
            <person name="Clermont O."/>
            <person name="Cruveiller S."/>
            <person name="Danchin A."/>
            <person name="Diard M."/>
            <person name="Dossat C."/>
            <person name="Karoui M.E."/>
            <person name="Frapy E."/>
            <person name="Garry L."/>
            <person name="Ghigo J.M."/>
            <person name="Gilles A.M."/>
            <person name="Johnson J."/>
            <person name="Le Bouguenec C."/>
            <person name="Lescat M."/>
            <person name="Mangenot S."/>
            <person name="Martinez-Jehanne V."/>
            <person name="Matic I."/>
            <person name="Nassif X."/>
            <person name="Oztas S."/>
            <person name="Petit M.A."/>
            <person name="Pichon C."/>
            <person name="Rouy Z."/>
            <person name="Ruf C.S."/>
            <person name="Schneider D."/>
            <person name="Tourret J."/>
            <person name="Vacherie B."/>
            <person name="Vallenet D."/>
            <person name="Medigue C."/>
            <person name="Rocha E.P.C."/>
            <person name="Denamur E."/>
        </authorList>
    </citation>
    <scope>NUCLEOTIDE SEQUENCE [LARGE SCALE GENOMIC DNA]</scope>
    <source>
        <strain>ED1a</strain>
    </source>
</reference>
<keyword id="KW-0238">DNA-binding</keyword>
<keyword id="KW-0479">Metal-binding</keyword>
<keyword id="KW-0533">Nickel</keyword>
<keyword id="KW-0678">Repressor</keyword>
<keyword id="KW-0804">Transcription</keyword>
<keyword id="KW-0805">Transcription regulation</keyword>
<name>NIKR_ECO81</name>
<feature type="chain" id="PRO_1000135553" description="Nickel-responsive regulator">
    <location>
        <begin position="1"/>
        <end position="133"/>
    </location>
</feature>
<feature type="binding site" evidence="1">
    <location>
        <position position="76"/>
    </location>
    <ligand>
        <name>Ni(2+)</name>
        <dbReference type="ChEBI" id="CHEBI:49786"/>
    </ligand>
</feature>
<feature type="binding site" evidence="1">
    <location>
        <position position="87"/>
    </location>
    <ligand>
        <name>Ni(2+)</name>
        <dbReference type="ChEBI" id="CHEBI:49786"/>
    </ligand>
</feature>
<feature type="binding site" evidence="1">
    <location>
        <position position="89"/>
    </location>
    <ligand>
        <name>Ni(2+)</name>
        <dbReference type="ChEBI" id="CHEBI:49786"/>
    </ligand>
</feature>
<feature type="binding site" evidence="1">
    <location>
        <position position="95"/>
    </location>
    <ligand>
        <name>Ni(2+)</name>
        <dbReference type="ChEBI" id="CHEBI:49786"/>
    </ligand>
</feature>
<comment type="function">
    <text evidence="1">Transcriptional repressor of the nikABCDE operon. Is active in the presence of excessive concentrations of intracellular nickel.</text>
</comment>
<comment type="cofactor">
    <cofactor evidence="1">
        <name>Ni(2+)</name>
        <dbReference type="ChEBI" id="CHEBI:49786"/>
    </cofactor>
    <text evidence="1">Binds 1 nickel ion per subunit.</text>
</comment>
<comment type="subunit">
    <text evidence="1">Homotetramer.</text>
</comment>
<comment type="similarity">
    <text evidence="1">Belongs to the transcriptional regulatory CopG/NikR family.</text>
</comment>
<sequence>MQRVTITLDDDLLETLDSLSQRRGYNNRSEAIRDILRSALAQEATQQHGTQGFAVLSYVYEHEKRDLASRIVSTQHHHHDLSVATLHVHINHDDCLEIAVLKGDMGDVQHFADDVIAQRGVRHGHLQCLPKED</sequence>
<protein>
    <recommendedName>
        <fullName evidence="1">Nickel-responsive regulator</fullName>
    </recommendedName>
</protein>